<feature type="chain" id="PRO_0000110767" description="Orotate phosphoribosyltransferase">
    <location>
        <begin position="1"/>
        <end position="213"/>
    </location>
</feature>
<feature type="binding site" description="in other chain" evidence="1">
    <location>
        <position position="26"/>
    </location>
    <ligand>
        <name>5-phospho-alpha-D-ribose 1-diphosphate</name>
        <dbReference type="ChEBI" id="CHEBI:58017"/>
        <note>ligand shared between dimeric partners</note>
    </ligand>
</feature>
<feature type="binding site" evidence="1">
    <location>
        <begin position="34"/>
        <end position="35"/>
    </location>
    <ligand>
        <name>orotate</name>
        <dbReference type="ChEBI" id="CHEBI:30839"/>
    </ligand>
</feature>
<feature type="binding site" description="in other chain" evidence="1">
    <location>
        <begin position="72"/>
        <end position="73"/>
    </location>
    <ligand>
        <name>5-phospho-alpha-D-ribose 1-diphosphate</name>
        <dbReference type="ChEBI" id="CHEBI:58017"/>
        <note>ligand shared between dimeric partners</note>
    </ligand>
</feature>
<feature type="binding site" evidence="1">
    <location>
        <position position="99"/>
    </location>
    <ligand>
        <name>5-phospho-alpha-D-ribose 1-diphosphate</name>
        <dbReference type="ChEBI" id="CHEBI:58017"/>
        <note>ligand shared between dimeric partners</note>
    </ligand>
</feature>
<feature type="binding site" description="in other chain" evidence="1">
    <location>
        <position position="100"/>
    </location>
    <ligand>
        <name>5-phospho-alpha-D-ribose 1-diphosphate</name>
        <dbReference type="ChEBI" id="CHEBI:58017"/>
        <note>ligand shared between dimeric partners</note>
    </ligand>
</feature>
<feature type="binding site" evidence="1">
    <location>
        <position position="103"/>
    </location>
    <ligand>
        <name>5-phospho-alpha-D-ribose 1-diphosphate</name>
        <dbReference type="ChEBI" id="CHEBI:58017"/>
        <note>ligand shared between dimeric partners</note>
    </ligand>
</feature>
<feature type="binding site" evidence="1">
    <location>
        <position position="105"/>
    </location>
    <ligand>
        <name>5-phospho-alpha-D-ribose 1-diphosphate</name>
        <dbReference type="ChEBI" id="CHEBI:58017"/>
        <note>ligand shared between dimeric partners</note>
    </ligand>
</feature>
<feature type="binding site" description="in other chain" evidence="1">
    <location>
        <begin position="124"/>
        <end position="132"/>
    </location>
    <ligand>
        <name>5-phospho-alpha-D-ribose 1-diphosphate</name>
        <dbReference type="ChEBI" id="CHEBI:58017"/>
        <note>ligand shared between dimeric partners</note>
    </ligand>
</feature>
<feature type="binding site" evidence="1">
    <location>
        <position position="128"/>
    </location>
    <ligand>
        <name>orotate</name>
        <dbReference type="ChEBI" id="CHEBI:30839"/>
    </ligand>
</feature>
<feature type="binding site" evidence="1">
    <location>
        <position position="156"/>
    </location>
    <ligand>
        <name>orotate</name>
        <dbReference type="ChEBI" id="CHEBI:30839"/>
    </ligand>
</feature>
<comment type="function">
    <text evidence="1">Catalyzes the transfer of a ribosyl phosphate group from 5-phosphoribose 1-diphosphate to orotate, leading to the formation of orotidine monophosphate (OMP).</text>
</comment>
<comment type="catalytic activity">
    <reaction evidence="1">
        <text>orotidine 5'-phosphate + diphosphate = orotate + 5-phospho-alpha-D-ribose 1-diphosphate</text>
        <dbReference type="Rhea" id="RHEA:10380"/>
        <dbReference type="ChEBI" id="CHEBI:30839"/>
        <dbReference type="ChEBI" id="CHEBI:33019"/>
        <dbReference type="ChEBI" id="CHEBI:57538"/>
        <dbReference type="ChEBI" id="CHEBI:58017"/>
        <dbReference type="EC" id="2.4.2.10"/>
    </reaction>
</comment>
<comment type="cofactor">
    <cofactor evidence="1">
        <name>Mg(2+)</name>
        <dbReference type="ChEBI" id="CHEBI:18420"/>
    </cofactor>
</comment>
<comment type="pathway">
    <text evidence="1">Pyrimidine metabolism; UMP biosynthesis via de novo pathway; UMP from orotate: step 1/2.</text>
</comment>
<comment type="subunit">
    <text evidence="1">Homodimer.</text>
</comment>
<comment type="similarity">
    <text evidence="1">Belongs to the purine/pyrimidine phosphoribosyltransferase family. PyrE subfamily.</text>
</comment>
<proteinExistence type="inferred from homology"/>
<accession>Q8DDX5</accession>
<dbReference type="EC" id="2.4.2.10" evidence="1"/>
<dbReference type="EMBL" id="AE016795">
    <property type="protein sequence ID" value="AAO09334.1"/>
    <property type="molecule type" value="Genomic_DNA"/>
</dbReference>
<dbReference type="RefSeq" id="WP_011078900.1">
    <property type="nucleotide sequence ID" value="NC_004459.3"/>
</dbReference>
<dbReference type="SMR" id="Q8DDX5"/>
<dbReference type="GeneID" id="93895130"/>
<dbReference type="KEGG" id="vvu:VV1_0831"/>
<dbReference type="HOGENOM" id="CLU_074878_0_1_6"/>
<dbReference type="UniPathway" id="UPA00070">
    <property type="reaction ID" value="UER00119"/>
</dbReference>
<dbReference type="Proteomes" id="UP000002275">
    <property type="component" value="Chromosome 1"/>
</dbReference>
<dbReference type="GO" id="GO:0005737">
    <property type="term" value="C:cytoplasm"/>
    <property type="evidence" value="ECO:0007669"/>
    <property type="project" value="TreeGrafter"/>
</dbReference>
<dbReference type="GO" id="GO:0000287">
    <property type="term" value="F:magnesium ion binding"/>
    <property type="evidence" value="ECO:0007669"/>
    <property type="project" value="UniProtKB-UniRule"/>
</dbReference>
<dbReference type="GO" id="GO:0004588">
    <property type="term" value="F:orotate phosphoribosyltransferase activity"/>
    <property type="evidence" value="ECO:0007669"/>
    <property type="project" value="UniProtKB-UniRule"/>
</dbReference>
<dbReference type="GO" id="GO:0006207">
    <property type="term" value="P:'de novo' pyrimidine nucleobase biosynthetic process"/>
    <property type="evidence" value="ECO:0007669"/>
    <property type="project" value="TreeGrafter"/>
</dbReference>
<dbReference type="GO" id="GO:0044205">
    <property type="term" value="P:'de novo' UMP biosynthetic process"/>
    <property type="evidence" value="ECO:0007669"/>
    <property type="project" value="UniProtKB-UniRule"/>
</dbReference>
<dbReference type="GO" id="GO:0046132">
    <property type="term" value="P:pyrimidine ribonucleoside biosynthetic process"/>
    <property type="evidence" value="ECO:0007669"/>
    <property type="project" value="TreeGrafter"/>
</dbReference>
<dbReference type="CDD" id="cd06223">
    <property type="entry name" value="PRTases_typeI"/>
    <property type="match status" value="1"/>
</dbReference>
<dbReference type="FunFam" id="3.40.50.2020:FF:000008">
    <property type="entry name" value="Orotate phosphoribosyltransferase"/>
    <property type="match status" value="1"/>
</dbReference>
<dbReference type="Gene3D" id="3.40.50.2020">
    <property type="match status" value="1"/>
</dbReference>
<dbReference type="HAMAP" id="MF_01208">
    <property type="entry name" value="PyrE"/>
    <property type="match status" value="1"/>
</dbReference>
<dbReference type="InterPro" id="IPR023031">
    <property type="entry name" value="OPRT"/>
</dbReference>
<dbReference type="InterPro" id="IPR004467">
    <property type="entry name" value="Or_phspho_trans_dom"/>
</dbReference>
<dbReference type="InterPro" id="IPR000836">
    <property type="entry name" value="PRibTrfase_dom"/>
</dbReference>
<dbReference type="InterPro" id="IPR029057">
    <property type="entry name" value="PRTase-like"/>
</dbReference>
<dbReference type="NCBIfam" id="TIGR00336">
    <property type="entry name" value="pyrE"/>
    <property type="match status" value="1"/>
</dbReference>
<dbReference type="PANTHER" id="PTHR46683">
    <property type="entry name" value="OROTATE PHOSPHORIBOSYLTRANSFERASE 1-RELATED"/>
    <property type="match status" value="1"/>
</dbReference>
<dbReference type="PANTHER" id="PTHR46683:SF1">
    <property type="entry name" value="OROTATE PHOSPHORIBOSYLTRANSFERASE 1-RELATED"/>
    <property type="match status" value="1"/>
</dbReference>
<dbReference type="Pfam" id="PF00156">
    <property type="entry name" value="Pribosyltran"/>
    <property type="match status" value="1"/>
</dbReference>
<dbReference type="SUPFAM" id="SSF53271">
    <property type="entry name" value="PRTase-like"/>
    <property type="match status" value="1"/>
</dbReference>
<dbReference type="PROSITE" id="PS00103">
    <property type="entry name" value="PUR_PYR_PR_TRANSFER"/>
    <property type="match status" value="1"/>
</dbReference>
<gene>
    <name evidence="1" type="primary">pyrE</name>
    <name type="ordered locus">VV1_0831</name>
</gene>
<keyword id="KW-0328">Glycosyltransferase</keyword>
<keyword id="KW-0460">Magnesium</keyword>
<keyword id="KW-0665">Pyrimidine biosynthesis</keyword>
<keyword id="KW-0808">Transferase</keyword>
<reference key="1">
    <citation type="submission" date="2002-12" db="EMBL/GenBank/DDBJ databases">
        <title>Complete genome sequence of Vibrio vulnificus CMCP6.</title>
        <authorList>
            <person name="Rhee J.H."/>
            <person name="Kim S.Y."/>
            <person name="Chung S.S."/>
            <person name="Kim J.J."/>
            <person name="Moon Y.H."/>
            <person name="Jeong H."/>
            <person name="Choy H.E."/>
        </authorList>
    </citation>
    <scope>NUCLEOTIDE SEQUENCE [LARGE SCALE GENOMIC DNA]</scope>
    <source>
        <strain>CMCP6</strain>
    </source>
</reference>
<protein>
    <recommendedName>
        <fullName evidence="1">Orotate phosphoribosyltransferase</fullName>
        <shortName evidence="1">OPRT</shortName>
        <shortName evidence="1">OPRTase</shortName>
        <ecNumber evidence="1">2.4.2.10</ecNumber>
    </recommendedName>
</protein>
<organism>
    <name type="scientific">Vibrio vulnificus (strain CMCP6)</name>
    <dbReference type="NCBI Taxonomy" id="216895"/>
    <lineage>
        <taxon>Bacteria</taxon>
        <taxon>Pseudomonadati</taxon>
        <taxon>Pseudomonadota</taxon>
        <taxon>Gammaproteobacteria</taxon>
        <taxon>Vibrionales</taxon>
        <taxon>Vibrionaceae</taxon>
        <taxon>Vibrio</taxon>
    </lineage>
</organism>
<name>PYRE_VIBVU</name>
<sequence length="213" mass="23173">MKAYQREFIEFALEKQVLKFGEFTLKSGRKSPYFFNAGLFNTGRDLARLGRFYAAALADSGIEFDVLFGPAYKGIPIATTTAVALADHHDIDTPYCFNRKEAKDHGEGGNLVGSALEGRIMLVDDVITAGTAIRESMEIIQANGADLAGVLVAIDRQEKGKGELSAIQEVERDFACAVISIVSLSDLITFLEEKGDAAEHLDAVKAYRAQYGI</sequence>
<evidence type="ECO:0000255" key="1">
    <source>
        <dbReference type="HAMAP-Rule" id="MF_01208"/>
    </source>
</evidence>